<comment type="function">
    <text evidence="1">Involved in mRNA degradation. Catalyzes the phosphorolysis of single-stranded polyribonucleotides processively in the 3'- to 5'-direction.</text>
</comment>
<comment type="catalytic activity">
    <reaction evidence="1">
        <text>RNA(n+1) + phosphate = RNA(n) + a ribonucleoside 5'-diphosphate</text>
        <dbReference type="Rhea" id="RHEA:22096"/>
        <dbReference type="Rhea" id="RHEA-COMP:14527"/>
        <dbReference type="Rhea" id="RHEA-COMP:17342"/>
        <dbReference type="ChEBI" id="CHEBI:43474"/>
        <dbReference type="ChEBI" id="CHEBI:57930"/>
        <dbReference type="ChEBI" id="CHEBI:140395"/>
        <dbReference type="EC" id="2.7.7.8"/>
    </reaction>
</comment>
<comment type="cofactor">
    <cofactor evidence="1">
        <name>Mg(2+)</name>
        <dbReference type="ChEBI" id="CHEBI:18420"/>
    </cofactor>
</comment>
<comment type="subcellular location">
    <subcellularLocation>
        <location evidence="1">Cytoplasm</location>
    </subcellularLocation>
</comment>
<comment type="similarity">
    <text evidence="1">Belongs to the polyribonucleotide nucleotidyltransferase family.</text>
</comment>
<evidence type="ECO:0000255" key="1">
    <source>
        <dbReference type="HAMAP-Rule" id="MF_01595"/>
    </source>
</evidence>
<evidence type="ECO:0000256" key="2">
    <source>
        <dbReference type="SAM" id="MobiDB-lite"/>
    </source>
</evidence>
<proteinExistence type="inferred from homology"/>
<dbReference type="EC" id="2.7.7.8" evidence="1"/>
<dbReference type="EMBL" id="AE017283">
    <property type="protein sequence ID" value="AAT83219.1"/>
    <property type="molecule type" value="Genomic_DNA"/>
</dbReference>
<dbReference type="RefSeq" id="WP_002516891.1">
    <property type="nucleotide sequence ID" value="NZ_CP025935.1"/>
</dbReference>
<dbReference type="SMR" id="Q6A7P6"/>
<dbReference type="EnsemblBacteria" id="AAT83219">
    <property type="protein sequence ID" value="AAT83219"/>
    <property type="gene ID" value="PPA1471"/>
</dbReference>
<dbReference type="KEGG" id="pac:PPA1471"/>
<dbReference type="eggNOG" id="COG1185">
    <property type="taxonomic scope" value="Bacteria"/>
</dbReference>
<dbReference type="HOGENOM" id="CLU_004217_2_2_11"/>
<dbReference type="Proteomes" id="UP000000603">
    <property type="component" value="Chromosome"/>
</dbReference>
<dbReference type="GO" id="GO:0005829">
    <property type="term" value="C:cytosol"/>
    <property type="evidence" value="ECO:0007669"/>
    <property type="project" value="TreeGrafter"/>
</dbReference>
<dbReference type="GO" id="GO:0000175">
    <property type="term" value="F:3'-5'-RNA exonuclease activity"/>
    <property type="evidence" value="ECO:0007669"/>
    <property type="project" value="TreeGrafter"/>
</dbReference>
<dbReference type="GO" id="GO:0000287">
    <property type="term" value="F:magnesium ion binding"/>
    <property type="evidence" value="ECO:0007669"/>
    <property type="project" value="UniProtKB-UniRule"/>
</dbReference>
<dbReference type="GO" id="GO:0004654">
    <property type="term" value="F:polyribonucleotide nucleotidyltransferase activity"/>
    <property type="evidence" value="ECO:0007669"/>
    <property type="project" value="UniProtKB-UniRule"/>
</dbReference>
<dbReference type="GO" id="GO:0003723">
    <property type="term" value="F:RNA binding"/>
    <property type="evidence" value="ECO:0007669"/>
    <property type="project" value="UniProtKB-UniRule"/>
</dbReference>
<dbReference type="GO" id="GO:0006402">
    <property type="term" value="P:mRNA catabolic process"/>
    <property type="evidence" value="ECO:0007669"/>
    <property type="project" value="UniProtKB-UniRule"/>
</dbReference>
<dbReference type="GO" id="GO:0006396">
    <property type="term" value="P:RNA processing"/>
    <property type="evidence" value="ECO:0007669"/>
    <property type="project" value="InterPro"/>
</dbReference>
<dbReference type="CDD" id="cd02393">
    <property type="entry name" value="KH-I_PNPase"/>
    <property type="match status" value="1"/>
</dbReference>
<dbReference type="CDD" id="cd11364">
    <property type="entry name" value="RNase_PH_PNPase_2"/>
    <property type="match status" value="1"/>
</dbReference>
<dbReference type="CDD" id="cd04472">
    <property type="entry name" value="S1_PNPase"/>
    <property type="match status" value="1"/>
</dbReference>
<dbReference type="FunFam" id="2.40.50.140:FF:000069">
    <property type="entry name" value="Polyribonucleotide nucleotidyltransferase"/>
    <property type="match status" value="1"/>
</dbReference>
<dbReference type="FunFam" id="3.30.1370.10:FF:000001">
    <property type="entry name" value="Polyribonucleotide nucleotidyltransferase"/>
    <property type="match status" value="1"/>
</dbReference>
<dbReference type="FunFam" id="3.30.230.70:FF:000001">
    <property type="entry name" value="Polyribonucleotide nucleotidyltransferase"/>
    <property type="match status" value="1"/>
</dbReference>
<dbReference type="FunFam" id="3.30.230.70:FF:000002">
    <property type="entry name" value="Polyribonucleotide nucleotidyltransferase"/>
    <property type="match status" value="1"/>
</dbReference>
<dbReference type="Gene3D" id="3.30.230.70">
    <property type="entry name" value="GHMP Kinase, N-terminal domain"/>
    <property type="match status" value="2"/>
</dbReference>
<dbReference type="Gene3D" id="3.30.1370.10">
    <property type="entry name" value="K Homology domain, type 1"/>
    <property type="match status" value="1"/>
</dbReference>
<dbReference type="Gene3D" id="2.40.50.140">
    <property type="entry name" value="Nucleic acid-binding proteins"/>
    <property type="match status" value="1"/>
</dbReference>
<dbReference type="HAMAP" id="MF_01595">
    <property type="entry name" value="PNPase"/>
    <property type="match status" value="1"/>
</dbReference>
<dbReference type="InterPro" id="IPR001247">
    <property type="entry name" value="ExoRNase_PH_dom1"/>
</dbReference>
<dbReference type="InterPro" id="IPR036345">
    <property type="entry name" value="ExoRNase_PH_dom2_sf"/>
</dbReference>
<dbReference type="InterPro" id="IPR014069">
    <property type="entry name" value="GPSI/PNP"/>
</dbReference>
<dbReference type="InterPro" id="IPR004087">
    <property type="entry name" value="KH_dom"/>
</dbReference>
<dbReference type="InterPro" id="IPR004088">
    <property type="entry name" value="KH_dom_type_1"/>
</dbReference>
<dbReference type="InterPro" id="IPR036612">
    <property type="entry name" value="KH_dom_type_1_sf"/>
</dbReference>
<dbReference type="InterPro" id="IPR012340">
    <property type="entry name" value="NA-bd_OB-fold"/>
</dbReference>
<dbReference type="InterPro" id="IPR012162">
    <property type="entry name" value="PNPase"/>
</dbReference>
<dbReference type="InterPro" id="IPR027408">
    <property type="entry name" value="PNPase/RNase_PH_dom_sf"/>
</dbReference>
<dbReference type="InterPro" id="IPR015848">
    <property type="entry name" value="PNPase_PH_RNA-bd_bac/org-type"/>
</dbReference>
<dbReference type="InterPro" id="IPR036456">
    <property type="entry name" value="PNPase_PH_RNA-bd_sf"/>
</dbReference>
<dbReference type="InterPro" id="IPR020568">
    <property type="entry name" value="Ribosomal_Su5_D2-typ_SF"/>
</dbReference>
<dbReference type="InterPro" id="IPR003029">
    <property type="entry name" value="S1_domain"/>
</dbReference>
<dbReference type="NCBIfam" id="TIGR03591">
    <property type="entry name" value="polynuc_phos"/>
    <property type="match status" value="1"/>
</dbReference>
<dbReference type="NCBIfam" id="TIGR02696">
    <property type="entry name" value="pppGpp_PNP"/>
    <property type="match status" value="1"/>
</dbReference>
<dbReference type="NCBIfam" id="NF008805">
    <property type="entry name" value="PRK11824.1"/>
    <property type="match status" value="1"/>
</dbReference>
<dbReference type="PANTHER" id="PTHR11252">
    <property type="entry name" value="POLYRIBONUCLEOTIDE NUCLEOTIDYLTRANSFERASE"/>
    <property type="match status" value="1"/>
</dbReference>
<dbReference type="PANTHER" id="PTHR11252:SF0">
    <property type="entry name" value="POLYRIBONUCLEOTIDE NUCLEOTIDYLTRANSFERASE 1, MITOCHONDRIAL"/>
    <property type="match status" value="1"/>
</dbReference>
<dbReference type="Pfam" id="PF00013">
    <property type="entry name" value="KH_1"/>
    <property type="match status" value="1"/>
</dbReference>
<dbReference type="Pfam" id="PF03726">
    <property type="entry name" value="PNPase"/>
    <property type="match status" value="1"/>
</dbReference>
<dbReference type="Pfam" id="PF01138">
    <property type="entry name" value="RNase_PH"/>
    <property type="match status" value="2"/>
</dbReference>
<dbReference type="Pfam" id="PF00575">
    <property type="entry name" value="S1"/>
    <property type="match status" value="1"/>
</dbReference>
<dbReference type="PIRSF" id="PIRSF005499">
    <property type="entry name" value="PNPase"/>
    <property type="match status" value="1"/>
</dbReference>
<dbReference type="SMART" id="SM00322">
    <property type="entry name" value="KH"/>
    <property type="match status" value="1"/>
</dbReference>
<dbReference type="SMART" id="SM00316">
    <property type="entry name" value="S1"/>
    <property type="match status" value="1"/>
</dbReference>
<dbReference type="SUPFAM" id="SSF54791">
    <property type="entry name" value="Eukaryotic type KH-domain (KH-domain type I)"/>
    <property type="match status" value="1"/>
</dbReference>
<dbReference type="SUPFAM" id="SSF50249">
    <property type="entry name" value="Nucleic acid-binding proteins"/>
    <property type="match status" value="1"/>
</dbReference>
<dbReference type="SUPFAM" id="SSF46915">
    <property type="entry name" value="Polynucleotide phosphorylase/guanosine pentaphosphate synthase (PNPase/GPSI), domain 3"/>
    <property type="match status" value="1"/>
</dbReference>
<dbReference type="SUPFAM" id="SSF55666">
    <property type="entry name" value="Ribonuclease PH domain 2-like"/>
    <property type="match status" value="2"/>
</dbReference>
<dbReference type="SUPFAM" id="SSF54211">
    <property type="entry name" value="Ribosomal protein S5 domain 2-like"/>
    <property type="match status" value="2"/>
</dbReference>
<dbReference type="PROSITE" id="PS50084">
    <property type="entry name" value="KH_TYPE_1"/>
    <property type="match status" value="1"/>
</dbReference>
<dbReference type="PROSITE" id="PS50126">
    <property type="entry name" value="S1"/>
    <property type="match status" value="1"/>
</dbReference>
<reference key="1">
    <citation type="journal article" date="2004" name="Science">
        <title>The complete genome sequence of Propionibacterium acnes, a commensal of human skin.</title>
        <authorList>
            <person name="Brueggemann H."/>
            <person name="Henne A."/>
            <person name="Hoster F."/>
            <person name="Liesegang H."/>
            <person name="Wiezer A."/>
            <person name="Strittmatter A."/>
            <person name="Hujer S."/>
            <person name="Duerre P."/>
            <person name="Gottschalk G."/>
        </authorList>
    </citation>
    <scope>NUCLEOTIDE SEQUENCE [LARGE SCALE GENOMIC DNA]</scope>
    <source>
        <strain>DSM 16379 / KPA171202</strain>
    </source>
</reference>
<feature type="chain" id="PRO_0000329774" description="Polyribonucleotide nucleotidyltransferase">
    <location>
        <begin position="1"/>
        <end position="733"/>
    </location>
</feature>
<feature type="domain" description="KH" evidence="1">
    <location>
        <begin position="582"/>
        <end position="641"/>
    </location>
</feature>
<feature type="domain" description="S1 motif" evidence="1">
    <location>
        <begin position="653"/>
        <end position="725"/>
    </location>
</feature>
<feature type="region of interest" description="Disordered" evidence="2">
    <location>
        <begin position="404"/>
        <end position="424"/>
    </location>
</feature>
<feature type="binding site" evidence="1">
    <location>
        <position position="516"/>
    </location>
    <ligand>
        <name>Mg(2+)</name>
        <dbReference type="ChEBI" id="CHEBI:18420"/>
    </ligand>
</feature>
<feature type="binding site" evidence="1">
    <location>
        <position position="522"/>
    </location>
    <ligand>
        <name>Mg(2+)</name>
        <dbReference type="ChEBI" id="CHEBI:18420"/>
    </ligand>
</feature>
<protein>
    <recommendedName>
        <fullName evidence="1">Polyribonucleotide nucleotidyltransferase</fullName>
        <ecNumber evidence="1">2.7.7.8</ecNumber>
    </recommendedName>
    <alternativeName>
        <fullName evidence="1">Polynucleotide phosphorylase</fullName>
        <shortName evidence="1">PNPase</shortName>
    </alternativeName>
</protein>
<sequence length="733" mass="78873">MEGPGLEFTEAIIDNGKLGKHVVRFEAGLLAQQADGSAAVYLDGDTMLLSATTAAKTPRDSIDFFPLTVDVEERMYAAGRIPGSFFRREGRPSEGAILACRLIDRPLRPSFVKGLRNEVQVVVTVMALNPAVYYDVVAINAASMSTQLAGLPFSGPIGGVRMALIDDQWVCFPSVDQRKESTFDMVVAGRVLADGDVAIMMVEAESTPATWGLVRGGRTAPTEEVVATGLEAAKPFIKVLCDAQVALAAKLPKETYDFPVFKDYEDDVYAAVEEKAADELSRIEQIAAKLERQEAESELKARIKAELAETFPEREAEISGAFKAVMKKIVRKRVLDEGVRIDGRGPRDIRSLSAEVGIIPRVHGSALFQRGETQILGVSTLNMLDMEQKLDTLSPENTRRYMHNYNMPPYSTGETGRVGSPKRREIGHGNLAERALIPVLPTREEFPYAIREVSEAIGSNGSTSMGSVCASTLALLNAGVPLRASVAGIAMGLMSETDEDGKTKYLALTDILGAEDALGDMDFKVAGTSEFVTALQLDTKLDGIPADVLAGALKQAKEARTAILEVMNEAIDSPDEMAPTAPRIITVHIPVDKIGEVIGPKGKMINQIQDDTGANISIEDDGTIFIGADNGDSAESARSMINAIANPQMPEVGERYLGTVVKTTSFGAFVSLLPGKDGLLHISKMRDLNDGKRVEAVEDVLSVGQKIQVEIAEVDDRGKLSLVLASDEDDADE</sequence>
<organism>
    <name type="scientific">Cutibacterium acnes (strain DSM 16379 / KPA171202)</name>
    <name type="common">Propionibacterium acnes</name>
    <dbReference type="NCBI Taxonomy" id="267747"/>
    <lineage>
        <taxon>Bacteria</taxon>
        <taxon>Bacillati</taxon>
        <taxon>Actinomycetota</taxon>
        <taxon>Actinomycetes</taxon>
        <taxon>Propionibacteriales</taxon>
        <taxon>Propionibacteriaceae</taxon>
        <taxon>Cutibacterium</taxon>
    </lineage>
</organism>
<keyword id="KW-0963">Cytoplasm</keyword>
<keyword id="KW-0460">Magnesium</keyword>
<keyword id="KW-0479">Metal-binding</keyword>
<keyword id="KW-0548">Nucleotidyltransferase</keyword>
<keyword id="KW-0694">RNA-binding</keyword>
<keyword id="KW-0808">Transferase</keyword>
<accession>Q6A7P6</accession>
<gene>
    <name evidence="1" type="primary">pnp</name>
    <name type="ordered locus">PPA1471</name>
</gene>
<name>PNP_CUTAK</name>